<feature type="chain" id="PRO_0000130015" description="Small ribosomal subunit protein uS19">
    <location>
        <begin position="1"/>
        <end position="140"/>
    </location>
</feature>
<reference key="1">
    <citation type="journal article" date="2000" name="Genome">
        <title>Gene content and organization of a 281-kbp contig from the genome of the extremely thermophilic archaeon, Sulfolobus solfataricus P2.</title>
        <authorList>
            <person name="Charlebois R.L."/>
            <person name="Singh R.K."/>
            <person name="Chan-Weiher C.C.-Y."/>
            <person name="Allard G."/>
            <person name="Chow C."/>
            <person name="Confalonieri F."/>
            <person name="Curtis B."/>
            <person name="Duguet M."/>
            <person name="Erauso G."/>
            <person name="Faguy D."/>
            <person name="Gaasterland T."/>
            <person name="Garrett R.A."/>
            <person name="Gordon P."/>
            <person name="Jeffries A.C."/>
            <person name="Kozera C."/>
            <person name="Kushwaha N."/>
            <person name="Lafleur E."/>
            <person name="Medina N."/>
            <person name="Peng X."/>
            <person name="Penny S.L."/>
            <person name="She Q."/>
            <person name="St Jean A."/>
            <person name="van der Oost J."/>
            <person name="Young F."/>
            <person name="Zivanovic Y."/>
            <person name="Doolittle W.F."/>
            <person name="Ragan M.A."/>
            <person name="Sensen C.W."/>
        </authorList>
    </citation>
    <scope>NUCLEOTIDE SEQUENCE [LARGE SCALE GENOMIC DNA]</scope>
    <source>
        <strain>ATCC 35092 / DSM 1617 / JCM 11322 / P2</strain>
    </source>
</reference>
<reference key="2">
    <citation type="journal article" date="2001" name="Proc. Natl. Acad. Sci. U.S.A.">
        <title>The complete genome of the crenarchaeon Sulfolobus solfataricus P2.</title>
        <authorList>
            <person name="She Q."/>
            <person name="Singh R.K."/>
            <person name="Confalonieri F."/>
            <person name="Zivanovic Y."/>
            <person name="Allard G."/>
            <person name="Awayez M.J."/>
            <person name="Chan-Weiher C.C.-Y."/>
            <person name="Clausen I.G."/>
            <person name="Curtis B.A."/>
            <person name="De Moors A."/>
            <person name="Erauso G."/>
            <person name="Fletcher C."/>
            <person name="Gordon P.M.K."/>
            <person name="Heikamp-de Jong I."/>
            <person name="Jeffries A.C."/>
            <person name="Kozera C.J."/>
            <person name="Medina N."/>
            <person name="Peng X."/>
            <person name="Thi-Ngoc H.P."/>
            <person name="Redder P."/>
            <person name="Schenk M.E."/>
            <person name="Theriault C."/>
            <person name="Tolstrup N."/>
            <person name="Charlebois R.L."/>
            <person name="Doolittle W.F."/>
            <person name="Duguet M."/>
            <person name="Gaasterland T."/>
            <person name="Garrett R.A."/>
            <person name="Ragan M.A."/>
            <person name="Sensen C.W."/>
            <person name="Van der Oost J."/>
        </authorList>
    </citation>
    <scope>NUCLEOTIDE SEQUENCE [LARGE SCALE GENOMIC DNA]</scope>
    <source>
        <strain>ATCC 35092 / DSM 1617 / JCM 11322 / P2</strain>
    </source>
</reference>
<evidence type="ECO:0000250" key="1"/>
<evidence type="ECO:0000305" key="2"/>
<sequence>MSLEIPPEWKNFKYRGKSIDELLNMPMDEFIKLLPSRQRRSLKRGFTDAQRHLLEKVRKYRREGKFNKTIKTHVRNLVILPELIGLKMAVYNGKEFVEFTVTPEMIGHYLGEYSITTKKVEHGEPGLKATRSSLFLAMKG</sequence>
<dbReference type="EMBL" id="Y18930">
    <property type="protein sequence ID" value="CAB57589.1"/>
    <property type="molecule type" value="Genomic_DNA"/>
</dbReference>
<dbReference type="EMBL" id="AE006641">
    <property type="protein sequence ID" value="AAK41014.1"/>
    <property type="molecule type" value="Genomic_DNA"/>
</dbReference>
<dbReference type="PIR" id="G90219">
    <property type="entry name" value="G90219"/>
</dbReference>
<dbReference type="RefSeq" id="WP_009991278.1">
    <property type="nucleotide sequence ID" value="NC_002754.1"/>
</dbReference>
<dbReference type="PDB" id="9FHL">
    <property type="method" value="EM"/>
    <property type="resolution" value="2.50 A"/>
    <property type="chains" value="T=1-140"/>
</dbReference>
<dbReference type="PDB" id="9FRA">
    <property type="method" value="EM"/>
    <property type="resolution" value="2.80 A"/>
    <property type="chains" value="T=1-140"/>
</dbReference>
<dbReference type="PDB" id="9FRK">
    <property type="method" value="EM"/>
    <property type="resolution" value="3.00 A"/>
    <property type="chains" value="T=1-140"/>
</dbReference>
<dbReference type="PDB" id="9FRL">
    <property type="method" value="EM"/>
    <property type="resolution" value="2.97 A"/>
    <property type="chains" value="T=1-140"/>
</dbReference>
<dbReference type="PDB" id="9FS6">
    <property type="method" value="EM"/>
    <property type="resolution" value="2.90 A"/>
    <property type="chains" value="T=1-140"/>
</dbReference>
<dbReference type="PDB" id="9FS8">
    <property type="method" value="EM"/>
    <property type="resolution" value="3.70 A"/>
    <property type="chains" value="T=1-140"/>
</dbReference>
<dbReference type="PDB" id="9FSF">
    <property type="method" value="EM"/>
    <property type="resolution" value="2.80 A"/>
    <property type="chains" value="T=1-140"/>
</dbReference>
<dbReference type="PDB" id="9FY0">
    <property type="method" value="EM"/>
    <property type="resolution" value="2.90 A"/>
    <property type="chains" value="T=1-140"/>
</dbReference>
<dbReference type="PDBsum" id="9FHL"/>
<dbReference type="PDBsum" id="9FRA"/>
<dbReference type="PDBsum" id="9FRK"/>
<dbReference type="PDBsum" id="9FRL"/>
<dbReference type="PDBsum" id="9FS6"/>
<dbReference type="PDBsum" id="9FS8"/>
<dbReference type="PDBsum" id="9FSF"/>
<dbReference type="PDBsum" id="9FY0"/>
<dbReference type="EMDB" id="EMD-50445"/>
<dbReference type="EMDB" id="EMD-50709"/>
<dbReference type="EMDB" id="EMD-50716"/>
<dbReference type="EMDB" id="EMD-50717"/>
<dbReference type="EMDB" id="EMD-50724"/>
<dbReference type="EMDB" id="EMD-50725"/>
<dbReference type="EMDB" id="EMD-50727"/>
<dbReference type="EMDB" id="EMD-50854"/>
<dbReference type="SMR" id="Q9UXA3"/>
<dbReference type="FunCoup" id="Q9UXA3">
    <property type="interactions" value="201"/>
</dbReference>
<dbReference type="STRING" id="273057.SSO0715"/>
<dbReference type="PaxDb" id="273057-SSO0715"/>
<dbReference type="EnsemblBacteria" id="AAK41014">
    <property type="protein sequence ID" value="AAK41014"/>
    <property type="gene ID" value="SSO0715"/>
</dbReference>
<dbReference type="KEGG" id="sso:SSO0715"/>
<dbReference type="PATRIC" id="fig|273057.12.peg.714"/>
<dbReference type="eggNOG" id="arCOG04099">
    <property type="taxonomic scope" value="Archaea"/>
</dbReference>
<dbReference type="HOGENOM" id="CLU_097347_1_1_2"/>
<dbReference type="InParanoid" id="Q9UXA3"/>
<dbReference type="PhylomeDB" id="Q9UXA3"/>
<dbReference type="Proteomes" id="UP000001974">
    <property type="component" value="Chromosome"/>
</dbReference>
<dbReference type="GO" id="GO:0022627">
    <property type="term" value="C:cytosolic small ribosomal subunit"/>
    <property type="evidence" value="ECO:0000318"/>
    <property type="project" value="GO_Central"/>
</dbReference>
<dbReference type="GO" id="GO:0019843">
    <property type="term" value="F:rRNA binding"/>
    <property type="evidence" value="ECO:0007669"/>
    <property type="project" value="UniProtKB-UniRule"/>
</dbReference>
<dbReference type="GO" id="GO:0003735">
    <property type="term" value="F:structural constituent of ribosome"/>
    <property type="evidence" value="ECO:0000318"/>
    <property type="project" value="GO_Central"/>
</dbReference>
<dbReference type="GO" id="GO:0000028">
    <property type="term" value="P:ribosomal small subunit assembly"/>
    <property type="evidence" value="ECO:0000318"/>
    <property type="project" value="GO_Central"/>
</dbReference>
<dbReference type="GO" id="GO:0006412">
    <property type="term" value="P:translation"/>
    <property type="evidence" value="ECO:0007669"/>
    <property type="project" value="UniProtKB-UniRule"/>
</dbReference>
<dbReference type="FunFam" id="3.30.860.10:FF:000002">
    <property type="entry name" value="40S ribosomal protein S15"/>
    <property type="match status" value="1"/>
</dbReference>
<dbReference type="Gene3D" id="3.30.860.10">
    <property type="entry name" value="30s Ribosomal Protein S19, Chain A"/>
    <property type="match status" value="1"/>
</dbReference>
<dbReference type="HAMAP" id="MF_00531">
    <property type="entry name" value="Ribosomal_uS19"/>
    <property type="match status" value="1"/>
</dbReference>
<dbReference type="InterPro" id="IPR002222">
    <property type="entry name" value="Ribosomal_uS19"/>
</dbReference>
<dbReference type="InterPro" id="IPR020934">
    <property type="entry name" value="Ribosomal_uS19_CS"/>
</dbReference>
<dbReference type="InterPro" id="IPR005713">
    <property type="entry name" value="Ribosomal_uS19_euk/arc"/>
</dbReference>
<dbReference type="InterPro" id="IPR023575">
    <property type="entry name" value="Ribosomal_uS19_SF"/>
</dbReference>
<dbReference type="NCBIfam" id="NF003121">
    <property type="entry name" value="PRK04038.1"/>
    <property type="match status" value="1"/>
</dbReference>
<dbReference type="NCBIfam" id="TIGR01025">
    <property type="entry name" value="uS19_arch"/>
    <property type="match status" value="1"/>
</dbReference>
<dbReference type="PANTHER" id="PTHR11880">
    <property type="entry name" value="RIBOSOMAL PROTEIN S19P FAMILY MEMBER"/>
    <property type="match status" value="1"/>
</dbReference>
<dbReference type="PANTHER" id="PTHR11880:SF2">
    <property type="entry name" value="SMALL RIBOSOMAL SUBUNIT PROTEIN US19"/>
    <property type="match status" value="1"/>
</dbReference>
<dbReference type="Pfam" id="PF00203">
    <property type="entry name" value="Ribosomal_S19"/>
    <property type="match status" value="1"/>
</dbReference>
<dbReference type="PIRSF" id="PIRSF002144">
    <property type="entry name" value="Ribosomal_S19"/>
    <property type="match status" value="1"/>
</dbReference>
<dbReference type="PRINTS" id="PR00975">
    <property type="entry name" value="RIBOSOMALS19"/>
</dbReference>
<dbReference type="SUPFAM" id="SSF54570">
    <property type="entry name" value="Ribosomal protein S19"/>
    <property type="match status" value="1"/>
</dbReference>
<dbReference type="PROSITE" id="PS00323">
    <property type="entry name" value="RIBOSOMAL_S19"/>
    <property type="match status" value="1"/>
</dbReference>
<name>RS19_SACS2</name>
<organism>
    <name type="scientific">Saccharolobus solfataricus (strain ATCC 35092 / DSM 1617 / JCM 11322 / P2)</name>
    <name type="common">Sulfolobus solfataricus</name>
    <dbReference type="NCBI Taxonomy" id="273057"/>
    <lineage>
        <taxon>Archaea</taxon>
        <taxon>Thermoproteota</taxon>
        <taxon>Thermoprotei</taxon>
        <taxon>Sulfolobales</taxon>
        <taxon>Sulfolobaceae</taxon>
        <taxon>Saccharolobus</taxon>
    </lineage>
</organism>
<protein>
    <recommendedName>
        <fullName evidence="2">Small ribosomal subunit protein uS19</fullName>
    </recommendedName>
    <alternativeName>
        <fullName>30S ribosomal protein S19</fullName>
    </alternativeName>
</protein>
<comment type="function">
    <text evidence="1">Protein S19 forms a complex with S13 that binds strongly to the 16S ribosomal RNA.</text>
</comment>
<comment type="similarity">
    <text evidence="2">Belongs to the universal ribosomal protein uS19 family.</text>
</comment>
<accession>Q9UXA3</accession>
<keyword id="KW-0002">3D-structure</keyword>
<keyword id="KW-1185">Reference proteome</keyword>
<keyword id="KW-0687">Ribonucleoprotein</keyword>
<keyword id="KW-0689">Ribosomal protein</keyword>
<keyword id="KW-0694">RNA-binding</keyword>
<keyword id="KW-0699">rRNA-binding</keyword>
<proteinExistence type="evidence at protein level"/>
<gene>
    <name type="primary">rps19</name>
    <name type="synonym">rps19Ab</name>
    <name type="ordered locus">SSO0715</name>
    <name type="ORF">C10_016</name>
</gene>